<proteinExistence type="inferred from homology"/>
<organism>
    <name type="scientific">Mycobacterium tuberculosis (strain ATCC 25177 / H37Ra)</name>
    <dbReference type="NCBI Taxonomy" id="419947"/>
    <lineage>
        <taxon>Bacteria</taxon>
        <taxon>Bacillati</taxon>
        <taxon>Actinomycetota</taxon>
        <taxon>Actinomycetes</taxon>
        <taxon>Mycobacteriales</taxon>
        <taxon>Mycobacteriaceae</taxon>
        <taxon>Mycobacterium</taxon>
        <taxon>Mycobacterium tuberculosis complex</taxon>
    </lineage>
</organism>
<gene>
    <name type="ordered locus">MRA_0823</name>
</gene>
<keyword id="KW-0349">Heme</keyword>
<keyword id="KW-0408">Iron</keyword>
<keyword id="KW-0413">Isomerase</keyword>
<keyword id="KW-0479">Metal-binding</keyword>
<keyword id="KW-1185">Reference proteome</keyword>
<protein>
    <recommendedName>
        <fullName>Peroxynitrite isomerase 2</fullName>
        <ecNumber evidence="1">5.99.-.-</ecNumber>
    </recommendedName>
    <alternativeName>
        <fullName>Ferric nitrobindin</fullName>
        <shortName>Nb(III)</shortName>
    </alternativeName>
</protein>
<reference key="1">
    <citation type="journal article" date="2008" name="PLoS ONE">
        <title>Genetic basis of virulence attenuation revealed by comparative genomic analysis of Mycobacterium tuberculosis strain H37Ra versus H37Rv.</title>
        <authorList>
            <person name="Zheng H."/>
            <person name="Lu L."/>
            <person name="Wang B."/>
            <person name="Pu S."/>
            <person name="Zhang X."/>
            <person name="Zhu G."/>
            <person name="Shi W."/>
            <person name="Zhang L."/>
            <person name="Wang H."/>
            <person name="Wang S."/>
            <person name="Zhao G."/>
            <person name="Zhang Y."/>
        </authorList>
    </citation>
    <scope>NUCLEOTIDE SEQUENCE [LARGE SCALE GENOMIC DNA]</scope>
    <source>
        <strain>ATCC 25177 / H37Ra</strain>
    </source>
</reference>
<sequence>MSSGAGSDATGAGGVHAAGSGDRAVAAAVERAKATAARNIPAFDDLPVPADTANLREGADLNNALLALLPLVGVWRGEGEGRGPDGDYRFGQQIVVSHDGGDYLNWESRSWRLTATGDYQEPGLREAGFWRFVADPYDPSESQAIELLLAHSAGYVELFYGRPRTQSSWELVTDALARSRSGVLVGGAKRLYGIVEGGDLAYVEERVDADGGLVPHLSARLSRFVG</sequence>
<comment type="function">
    <text evidence="1">Heme-binding protein able to scavenge peroxynitrite and to protect free L-tyrosine against peroxynitrite-mediated nitration, by acting as a peroxynitrite isomerase that converts peroxynitrite to nitrate. Therefore, this protein likely plays a role in peroxynitrite sensing and in the detoxification of reactive nitrogen and oxygen species (RNS and ROS, respectively). Is able to bind nitric oxide (NO) in vitro, but may act as a sensor of peroxynitrite levels in vivo.</text>
</comment>
<comment type="catalytic activity">
    <reaction evidence="1">
        <text>peroxynitrite = nitrate</text>
        <dbReference type="Rhea" id="RHEA:63116"/>
        <dbReference type="ChEBI" id="CHEBI:17632"/>
        <dbReference type="ChEBI" id="CHEBI:25941"/>
    </reaction>
    <physiologicalReaction direction="left-to-right" evidence="1">
        <dbReference type="Rhea" id="RHEA:63117"/>
    </physiologicalReaction>
</comment>
<comment type="cofactor">
    <cofactor evidence="1">
        <name>heme b</name>
        <dbReference type="ChEBI" id="CHEBI:60344"/>
    </cofactor>
    <text evidence="1">Binds 1 heme b group per subunit, that coordinates a highly solvent-exposed Fe(III) atom.</text>
</comment>
<comment type="pathway">
    <text evidence="1">Nitrogen metabolism.</text>
</comment>
<comment type="domain">
    <text evidence="1">Forms a 10-stranded antiparallel beta-barrel structure able to accommodate a hydrophobic ligand in its interior. In fact, this fold hosts the heme group, which is located in a wide surface cleft.</text>
</comment>
<comment type="similarity">
    <text evidence="1">Belongs to the nitrobindin family.</text>
</comment>
<accession>A5U0K2</accession>
<name>NB2_MYCTA</name>
<dbReference type="EC" id="5.99.-.-" evidence="1"/>
<dbReference type="EMBL" id="CP000611">
    <property type="protein sequence ID" value="ABQ72552.1"/>
    <property type="molecule type" value="Genomic_DNA"/>
</dbReference>
<dbReference type="RefSeq" id="WP_003898596.1">
    <property type="nucleotide sequence ID" value="NZ_CP016972.1"/>
</dbReference>
<dbReference type="SMR" id="A5U0K2"/>
<dbReference type="KEGG" id="mra:MRA_0823"/>
<dbReference type="eggNOG" id="COG4044">
    <property type="taxonomic scope" value="Bacteria"/>
</dbReference>
<dbReference type="HOGENOM" id="CLU_085483_0_0_11"/>
<dbReference type="Proteomes" id="UP000001988">
    <property type="component" value="Chromosome"/>
</dbReference>
<dbReference type="GO" id="GO:0020037">
    <property type="term" value="F:heme binding"/>
    <property type="evidence" value="ECO:0007669"/>
    <property type="project" value="UniProtKB-UniRule"/>
</dbReference>
<dbReference type="GO" id="GO:0046872">
    <property type="term" value="F:metal ion binding"/>
    <property type="evidence" value="ECO:0007669"/>
    <property type="project" value="UniProtKB-KW"/>
</dbReference>
<dbReference type="GO" id="GO:0062213">
    <property type="term" value="F:peroxynitrite isomerase activity"/>
    <property type="evidence" value="ECO:0007669"/>
    <property type="project" value="UniProtKB-UniRule"/>
</dbReference>
<dbReference type="CDD" id="cd07828">
    <property type="entry name" value="lipocalin_heme-bd-THAP4-like"/>
    <property type="match status" value="1"/>
</dbReference>
<dbReference type="FunFam" id="2.40.128.20:FF:000025">
    <property type="entry name" value="UPF0678 fatty acid-binding protein-like protein Rv0813c"/>
    <property type="match status" value="1"/>
</dbReference>
<dbReference type="Gene3D" id="2.40.128.20">
    <property type="match status" value="1"/>
</dbReference>
<dbReference type="HAMAP" id="MF_01297">
    <property type="entry name" value="nitrobindin"/>
    <property type="match status" value="1"/>
</dbReference>
<dbReference type="InterPro" id="IPR012674">
    <property type="entry name" value="Calycin"/>
</dbReference>
<dbReference type="InterPro" id="IPR022939">
    <property type="entry name" value="Nb(III)_bact/plant"/>
</dbReference>
<dbReference type="InterPro" id="IPR045165">
    <property type="entry name" value="Nitrobindin"/>
</dbReference>
<dbReference type="InterPro" id="IPR014878">
    <property type="entry name" value="THAP4-like_heme-bd"/>
</dbReference>
<dbReference type="PANTHER" id="PTHR15854:SF4">
    <property type="entry name" value="PEROXYNITRITE ISOMERASE THAP4"/>
    <property type="match status" value="1"/>
</dbReference>
<dbReference type="PANTHER" id="PTHR15854">
    <property type="entry name" value="THAP4 PROTEIN"/>
    <property type="match status" value="1"/>
</dbReference>
<dbReference type="Pfam" id="PF08768">
    <property type="entry name" value="THAP4_heme-bd"/>
    <property type="match status" value="1"/>
</dbReference>
<dbReference type="SUPFAM" id="SSF50814">
    <property type="entry name" value="Lipocalins"/>
    <property type="match status" value="1"/>
</dbReference>
<feature type="chain" id="PRO_0000356935" description="Peroxynitrite isomerase 2">
    <location>
        <begin position="1"/>
        <end position="226"/>
    </location>
</feature>
<feature type="short sequence motif" description="GXWXGXG" evidence="1">
    <location>
        <begin position="73"/>
        <end position="79"/>
    </location>
</feature>
<feature type="binding site" evidence="1">
    <location>
        <position position="189"/>
    </location>
    <ligand>
        <name>heme b</name>
        <dbReference type="ChEBI" id="CHEBI:60344"/>
    </ligand>
</feature>
<feature type="binding site" description="axial binding residue" evidence="1">
    <location>
        <position position="216"/>
    </location>
    <ligand>
        <name>heme b</name>
        <dbReference type="ChEBI" id="CHEBI:60344"/>
    </ligand>
    <ligandPart>
        <name>Fe</name>
        <dbReference type="ChEBI" id="CHEBI:18248"/>
    </ligandPart>
</feature>
<evidence type="ECO:0000255" key="1">
    <source>
        <dbReference type="HAMAP-Rule" id="MF_01297"/>
    </source>
</evidence>